<feature type="chain" id="PRO_0000439046" description="DNA-binding protein 7b">
    <location>
        <begin position="1"/>
        <end position="62"/>
    </location>
</feature>
<proteinExistence type="evidence at protein level"/>
<comment type="function">
    <text evidence="1">Can constrain negative DNA supercoils. May be involved in maintaining the integrity of the genome at high temperature.</text>
</comment>
<comment type="biophysicochemical properties">
    <phDependence>
        <text evidence="2">Highly stable from pH 0 to pH 12.</text>
    </phDependence>
    <temperatureDependence>
        <text evidence="2">Hyperthermostable.</text>
    </temperatureDependence>
</comment>
<comment type="subunit">
    <text evidence="2">Monomer.</text>
</comment>
<comment type="subcellular location">
    <subcellularLocation>
        <location evidence="2">Cytoplasm</location>
    </subcellularLocation>
</comment>
<comment type="similarity">
    <text evidence="4">Belongs to the 7 kDa DNA-binding/endoribonuclease P2 family.</text>
</comment>
<reference key="1">
    <citation type="journal article" date="2011" name="Extremophiles">
        <title>Genomic analysis of Acidianus hospitalis W1 a host for studying crenarchaeal virus and plasmid life cycles.</title>
        <authorList>
            <person name="You X.Y."/>
            <person name="Liu C."/>
            <person name="Wang S.Y."/>
            <person name="Jiang C.Y."/>
            <person name="Shah S.A."/>
            <person name="Prangishvili D."/>
            <person name="She Q."/>
            <person name="Liu S.J."/>
            <person name="Garrett R.A."/>
        </authorList>
    </citation>
    <scope>NUCLEOTIDE SEQUENCE [LARGE SCALE GENOMIC DNA]</scope>
    <source>
        <strain>W1</strain>
    </source>
</reference>
<reference key="2">
    <citation type="journal article" date="2016" name="Sci. Rep.">
        <title>The archaeal '7 kDa DNA-binding' proteins: extended characterization of an old gifted family.</title>
        <authorList>
            <person name="Kalichuk V."/>
            <person name="Behar G."/>
            <person name="Renodon-Corniere A."/>
            <person name="Danovski G."/>
            <person name="Obal G."/>
            <person name="Barbet J."/>
            <person name="Mouratou B."/>
            <person name="Pecorari F."/>
        </authorList>
    </citation>
    <scope>DNA-BINDING</scope>
    <scope>BIOPHYSICOCHEMICAL PROPERTIES</scope>
    <scope>SUBUNIT</scope>
    <scope>SUBCELLULAR LOCATION</scope>
    <scope>NOMENCLATURE</scope>
</reference>
<protein>
    <recommendedName>
        <fullName evidence="4">DNA-binding protein 7b</fullName>
    </recommendedName>
    <alternativeName>
        <fullName evidence="4">7 kDa DNA-binding protein b</fullName>
    </alternativeName>
    <alternativeName>
        <fullName evidence="3">Aho7b</fullName>
    </alternativeName>
</protein>
<evidence type="ECO:0000250" key="1">
    <source>
        <dbReference type="UniProtKB" id="P61990"/>
    </source>
</evidence>
<evidence type="ECO:0000269" key="2">
    <source>
    </source>
</evidence>
<evidence type="ECO:0000303" key="3">
    <source>
    </source>
</evidence>
<evidence type="ECO:0000305" key="4"/>
<evidence type="ECO:0000312" key="5">
    <source>
        <dbReference type="EMBL" id="AEE95131.1"/>
    </source>
</evidence>
<name>DN7B_ACIHW</name>
<gene>
    <name evidence="5" type="ordered locus">Ahos_2260</name>
</gene>
<accession>F4B9I5</accession>
<organism>
    <name type="scientific">Acidianus hospitalis (strain W1)</name>
    <dbReference type="NCBI Taxonomy" id="933801"/>
    <lineage>
        <taxon>Archaea</taxon>
        <taxon>Thermoproteota</taxon>
        <taxon>Thermoprotei</taxon>
        <taxon>Sulfolobales</taxon>
        <taxon>Sulfolobaceae</taxon>
        <taxon>Acidianus</taxon>
    </lineage>
</organism>
<keyword id="KW-0963">Cytoplasm</keyword>
<keyword id="KW-0238">DNA-binding</keyword>
<dbReference type="EMBL" id="CP002535">
    <property type="protein sequence ID" value="AEE95131.1"/>
    <property type="molecule type" value="Genomic_DNA"/>
</dbReference>
<dbReference type="SMR" id="F4B9I5"/>
<dbReference type="STRING" id="933801.Ahos_2260"/>
<dbReference type="GeneID" id="10601766"/>
<dbReference type="KEGG" id="aho:Ahos_2260"/>
<dbReference type="eggNOG" id="arCOG05888">
    <property type="taxonomic scope" value="Archaea"/>
</dbReference>
<dbReference type="HOGENOM" id="CLU_2929990_0_0_2"/>
<dbReference type="OrthoDB" id="33867at2157"/>
<dbReference type="Proteomes" id="UP000008458">
    <property type="component" value="Chromosome"/>
</dbReference>
<dbReference type="GO" id="GO:0005737">
    <property type="term" value="C:cytoplasm"/>
    <property type="evidence" value="ECO:0007669"/>
    <property type="project" value="UniProtKB-SubCell"/>
</dbReference>
<dbReference type="GO" id="GO:0003677">
    <property type="term" value="F:DNA binding"/>
    <property type="evidence" value="ECO:0007669"/>
    <property type="project" value="UniProtKB-KW"/>
</dbReference>
<dbReference type="GO" id="GO:0004521">
    <property type="term" value="F:RNA endonuclease activity"/>
    <property type="evidence" value="ECO:0007669"/>
    <property type="project" value="InterPro"/>
</dbReference>
<dbReference type="Gene3D" id="2.40.50.40">
    <property type="match status" value="1"/>
</dbReference>
<dbReference type="InterPro" id="IPR016197">
    <property type="entry name" value="Chromo-like_dom_sf"/>
</dbReference>
<dbReference type="InterPro" id="IPR003212">
    <property type="entry name" value="DNA-bd_7a-e_arc"/>
</dbReference>
<dbReference type="NCBIfam" id="NF045555">
    <property type="entry name" value="Sul7d"/>
    <property type="match status" value="1"/>
</dbReference>
<dbReference type="Pfam" id="PF02294">
    <property type="entry name" value="7kD_DNA_binding"/>
    <property type="match status" value="1"/>
</dbReference>
<dbReference type="SUPFAM" id="SSF54160">
    <property type="entry name" value="Chromo domain-like"/>
    <property type="match status" value="1"/>
</dbReference>
<sequence>MATKVKFKYKGEEKEVDISKIKKVWRVGKMISFTYDDNGKTGRGAVSEKDAPKELLDKLEKK</sequence>